<evidence type="ECO:0000255" key="1">
    <source>
        <dbReference type="HAMAP-Rule" id="MF_01694"/>
    </source>
</evidence>
<evidence type="ECO:0000255" key="2">
    <source>
        <dbReference type="PROSITE-ProRule" id="PRU01266"/>
    </source>
</evidence>
<evidence type="ECO:0000305" key="3"/>
<protein>
    <recommendedName>
        <fullName evidence="1">Biotin synthase</fullName>
        <ecNumber evidence="1">2.8.1.6</ecNumber>
    </recommendedName>
</protein>
<gene>
    <name evidence="1" type="primary">bioB</name>
    <name type="ordered locus">Mevan_0552</name>
</gene>
<proteinExistence type="inferred from homology"/>
<keyword id="KW-0001">2Fe-2S</keyword>
<keyword id="KW-0004">4Fe-4S</keyword>
<keyword id="KW-0093">Biotin biosynthesis</keyword>
<keyword id="KW-0408">Iron</keyword>
<keyword id="KW-0411">Iron-sulfur</keyword>
<keyword id="KW-0479">Metal-binding</keyword>
<keyword id="KW-0949">S-adenosyl-L-methionine</keyword>
<keyword id="KW-0808">Transferase</keyword>
<comment type="function">
    <text evidence="1">Catalyzes the conversion of dethiobiotin (DTB) to biotin by the insertion of a sulfur atom into dethiobiotin via a radical-based mechanism.</text>
</comment>
<comment type="catalytic activity">
    <reaction evidence="1">
        <text>(4R,5S)-dethiobiotin + (sulfur carrier)-SH + 2 reduced [2Fe-2S]-[ferredoxin] + 2 S-adenosyl-L-methionine = (sulfur carrier)-H + biotin + 2 5'-deoxyadenosine + 2 L-methionine + 2 oxidized [2Fe-2S]-[ferredoxin]</text>
        <dbReference type="Rhea" id="RHEA:22060"/>
        <dbReference type="Rhea" id="RHEA-COMP:10000"/>
        <dbReference type="Rhea" id="RHEA-COMP:10001"/>
        <dbReference type="Rhea" id="RHEA-COMP:14737"/>
        <dbReference type="Rhea" id="RHEA-COMP:14739"/>
        <dbReference type="ChEBI" id="CHEBI:17319"/>
        <dbReference type="ChEBI" id="CHEBI:29917"/>
        <dbReference type="ChEBI" id="CHEBI:33737"/>
        <dbReference type="ChEBI" id="CHEBI:33738"/>
        <dbReference type="ChEBI" id="CHEBI:57586"/>
        <dbReference type="ChEBI" id="CHEBI:57844"/>
        <dbReference type="ChEBI" id="CHEBI:59789"/>
        <dbReference type="ChEBI" id="CHEBI:64428"/>
        <dbReference type="ChEBI" id="CHEBI:149473"/>
        <dbReference type="EC" id="2.8.1.6"/>
    </reaction>
</comment>
<comment type="cofactor">
    <cofactor evidence="1">
        <name>[4Fe-4S] cluster</name>
        <dbReference type="ChEBI" id="CHEBI:49883"/>
    </cofactor>
    <text evidence="1">Binds 1 [4Fe-4S] cluster. The cluster is coordinated with 3 cysteines and an exchangeable S-adenosyl-L-methionine.</text>
</comment>
<comment type="cofactor">
    <cofactor evidence="1">
        <name>[2Fe-2S] cluster</name>
        <dbReference type="ChEBI" id="CHEBI:190135"/>
    </cofactor>
    <text evidence="1">Binds 1 [2Fe-2S] cluster. The cluster is coordinated with 3 cysteines and 1 arginine.</text>
</comment>
<comment type="pathway">
    <text evidence="1">Cofactor biosynthesis; biotin biosynthesis; biotin from 7,8-diaminononanoate: step 2/2.</text>
</comment>
<comment type="subunit">
    <text evidence="1">Homodimer.</text>
</comment>
<comment type="similarity">
    <text evidence="1">Belongs to the radical SAM superfamily. Biotin synthase family.</text>
</comment>
<comment type="sequence caution" evidence="3">
    <conflict type="erroneous initiation">
        <sequence resource="EMBL-CDS" id="ABR54459"/>
    </conflict>
</comment>
<feature type="chain" id="PRO_0000381473" description="Biotin synthase">
    <location>
        <begin position="1"/>
        <end position="328"/>
    </location>
</feature>
<feature type="domain" description="Radical SAM core" evidence="2">
    <location>
        <begin position="49"/>
        <end position="273"/>
    </location>
</feature>
<feature type="binding site" evidence="1">
    <location>
        <position position="67"/>
    </location>
    <ligand>
        <name>[4Fe-4S] cluster</name>
        <dbReference type="ChEBI" id="CHEBI:49883"/>
        <note>4Fe-4S-S-AdoMet</note>
    </ligand>
</feature>
<feature type="binding site" evidence="1">
    <location>
        <position position="71"/>
    </location>
    <ligand>
        <name>[4Fe-4S] cluster</name>
        <dbReference type="ChEBI" id="CHEBI:49883"/>
        <note>4Fe-4S-S-AdoMet</note>
    </ligand>
</feature>
<feature type="binding site" evidence="1">
    <location>
        <position position="74"/>
    </location>
    <ligand>
        <name>[4Fe-4S] cluster</name>
        <dbReference type="ChEBI" id="CHEBI:49883"/>
        <note>4Fe-4S-S-AdoMet</note>
    </ligand>
</feature>
<feature type="binding site" evidence="1">
    <location>
        <position position="110"/>
    </location>
    <ligand>
        <name>[2Fe-2S] cluster</name>
        <dbReference type="ChEBI" id="CHEBI:190135"/>
    </ligand>
</feature>
<feature type="binding site" evidence="1">
    <location>
        <position position="142"/>
    </location>
    <ligand>
        <name>[2Fe-2S] cluster</name>
        <dbReference type="ChEBI" id="CHEBI:190135"/>
    </ligand>
</feature>
<feature type="binding site" evidence="1">
    <location>
        <position position="201"/>
    </location>
    <ligand>
        <name>[2Fe-2S] cluster</name>
        <dbReference type="ChEBI" id="CHEBI:190135"/>
    </ligand>
</feature>
<feature type="binding site" evidence="1">
    <location>
        <position position="277"/>
    </location>
    <ligand>
        <name>[2Fe-2S] cluster</name>
        <dbReference type="ChEBI" id="CHEBI:190135"/>
    </ligand>
</feature>
<sequence>MNERKLNKDFLEIYEMSISGKIKKEDALEILKLDVYDLLHISYHLKKAFNKEKIETCSIINAKSGFCSENCNFCSQSIHNNSKINIYGLKSKEEILKSAKSIENYSNRFSIVSSGKKISEKEFEDILEIIDEIKNKTKLKVCVSLGLLNKSQLKALMKKNIRIHNNLETSKNYFKNICTTHEYEDKVDVIKNGKKLGLQICSGGIFGLGEDIIDRIDLLYELKELNVDSISLNLLNPIEGTKMREKINSKEIKSIEPIDALKSICISRIIMPERVIRLCGGREYVLKDLQSLSLLAVDGLMIGNYLTTSGRNIQSDLRMIEDMGFKKG</sequence>
<name>BIOB_METVS</name>
<accession>A6UPN7</accession>
<reference key="1">
    <citation type="submission" date="2007-06" db="EMBL/GenBank/DDBJ databases">
        <title>Complete sequence of Methanococcus vannielii SB.</title>
        <authorList>
            <consortium name="US DOE Joint Genome Institute"/>
            <person name="Copeland A."/>
            <person name="Lucas S."/>
            <person name="Lapidus A."/>
            <person name="Barry K."/>
            <person name="Glavina del Rio T."/>
            <person name="Dalin E."/>
            <person name="Tice H."/>
            <person name="Pitluck S."/>
            <person name="Chain P."/>
            <person name="Malfatti S."/>
            <person name="Shin M."/>
            <person name="Vergez L."/>
            <person name="Schmutz J."/>
            <person name="Larimer F."/>
            <person name="Land M."/>
            <person name="Hauser L."/>
            <person name="Kyrpides N."/>
            <person name="Anderson I."/>
            <person name="Sieprawska-Lupa M."/>
            <person name="Whitman W.B."/>
            <person name="Richardson P."/>
        </authorList>
    </citation>
    <scope>NUCLEOTIDE SEQUENCE [LARGE SCALE GENOMIC DNA]</scope>
    <source>
        <strain>ATCC 35089 / DSM 1224 / JCM 13029 / OCM 148 / SB</strain>
    </source>
</reference>
<organism>
    <name type="scientific">Methanococcus vannielii (strain ATCC 35089 / DSM 1224 / JCM 13029 / OCM 148 / SB)</name>
    <dbReference type="NCBI Taxonomy" id="406327"/>
    <lineage>
        <taxon>Archaea</taxon>
        <taxon>Methanobacteriati</taxon>
        <taxon>Methanobacteriota</taxon>
        <taxon>Methanomada group</taxon>
        <taxon>Methanococci</taxon>
        <taxon>Methanococcales</taxon>
        <taxon>Methanococcaceae</taxon>
        <taxon>Methanococcus</taxon>
    </lineage>
</organism>
<dbReference type="EC" id="2.8.1.6" evidence="1"/>
<dbReference type="EMBL" id="CP000742">
    <property type="protein sequence ID" value="ABR54459.1"/>
    <property type="status" value="ALT_INIT"/>
    <property type="molecule type" value="Genomic_DNA"/>
</dbReference>
<dbReference type="RefSeq" id="WP_048059228.1">
    <property type="nucleotide sequence ID" value="NC_009634.1"/>
</dbReference>
<dbReference type="SMR" id="A6UPN7"/>
<dbReference type="STRING" id="406327.Mevan_0552"/>
<dbReference type="GeneID" id="5325979"/>
<dbReference type="KEGG" id="mvn:Mevan_0552"/>
<dbReference type="eggNOG" id="arCOG00658">
    <property type="taxonomic scope" value="Archaea"/>
</dbReference>
<dbReference type="HOGENOM" id="CLU_033172_2_1_2"/>
<dbReference type="OrthoDB" id="9264at2157"/>
<dbReference type="UniPathway" id="UPA00078">
    <property type="reaction ID" value="UER00162"/>
</dbReference>
<dbReference type="Proteomes" id="UP000001107">
    <property type="component" value="Chromosome"/>
</dbReference>
<dbReference type="GO" id="GO:0051537">
    <property type="term" value="F:2 iron, 2 sulfur cluster binding"/>
    <property type="evidence" value="ECO:0007669"/>
    <property type="project" value="UniProtKB-KW"/>
</dbReference>
<dbReference type="GO" id="GO:0051539">
    <property type="term" value="F:4 iron, 4 sulfur cluster binding"/>
    <property type="evidence" value="ECO:0007669"/>
    <property type="project" value="UniProtKB-KW"/>
</dbReference>
<dbReference type="GO" id="GO:0004076">
    <property type="term" value="F:biotin synthase activity"/>
    <property type="evidence" value="ECO:0007669"/>
    <property type="project" value="UniProtKB-UniRule"/>
</dbReference>
<dbReference type="GO" id="GO:0005506">
    <property type="term" value="F:iron ion binding"/>
    <property type="evidence" value="ECO:0007669"/>
    <property type="project" value="UniProtKB-UniRule"/>
</dbReference>
<dbReference type="GO" id="GO:0009102">
    <property type="term" value="P:biotin biosynthetic process"/>
    <property type="evidence" value="ECO:0007669"/>
    <property type="project" value="UniProtKB-UniRule"/>
</dbReference>
<dbReference type="CDD" id="cd01335">
    <property type="entry name" value="Radical_SAM"/>
    <property type="match status" value="1"/>
</dbReference>
<dbReference type="FunFam" id="3.20.20.70:FF:000605">
    <property type="match status" value="1"/>
</dbReference>
<dbReference type="Gene3D" id="3.20.20.70">
    <property type="entry name" value="Aldolase class I"/>
    <property type="match status" value="1"/>
</dbReference>
<dbReference type="HAMAP" id="MF_01694">
    <property type="entry name" value="BioB"/>
    <property type="match status" value="1"/>
</dbReference>
<dbReference type="InterPro" id="IPR013785">
    <property type="entry name" value="Aldolase_TIM"/>
</dbReference>
<dbReference type="InterPro" id="IPR010722">
    <property type="entry name" value="BATS_dom"/>
</dbReference>
<dbReference type="InterPro" id="IPR002684">
    <property type="entry name" value="Biotin_synth/BioAB"/>
</dbReference>
<dbReference type="InterPro" id="IPR024177">
    <property type="entry name" value="Biotin_synthase"/>
</dbReference>
<dbReference type="InterPro" id="IPR006638">
    <property type="entry name" value="Elp3/MiaA/NifB-like_rSAM"/>
</dbReference>
<dbReference type="InterPro" id="IPR007197">
    <property type="entry name" value="rSAM"/>
</dbReference>
<dbReference type="NCBIfam" id="TIGR00433">
    <property type="entry name" value="bioB"/>
    <property type="match status" value="1"/>
</dbReference>
<dbReference type="PANTHER" id="PTHR22976">
    <property type="entry name" value="BIOTIN SYNTHASE"/>
    <property type="match status" value="1"/>
</dbReference>
<dbReference type="PANTHER" id="PTHR22976:SF2">
    <property type="entry name" value="BIOTIN SYNTHASE, MITOCHONDRIAL"/>
    <property type="match status" value="1"/>
</dbReference>
<dbReference type="Pfam" id="PF06968">
    <property type="entry name" value="BATS"/>
    <property type="match status" value="1"/>
</dbReference>
<dbReference type="Pfam" id="PF04055">
    <property type="entry name" value="Radical_SAM"/>
    <property type="match status" value="1"/>
</dbReference>
<dbReference type="PIRSF" id="PIRSF001619">
    <property type="entry name" value="Biotin_synth"/>
    <property type="match status" value="1"/>
</dbReference>
<dbReference type="SFLD" id="SFLDG01060">
    <property type="entry name" value="BATS_domain_containing"/>
    <property type="match status" value="1"/>
</dbReference>
<dbReference type="SFLD" id="SFLDG01278">
    <property type="entry name" value="biotin_synthase_like"/>
    <property type="match status" value="1"/>
</dbReference>
<dbReference type="SMART" id="SM00876">
    <property type="entry name" value="BATS"/>
    <property type="match status" value="1"/>
</dbReference>
<dbReference type="SMART" id="SM00729">
    <property type="entry name" value="Elp3"/>
    <property type="match status" value="1"/>
</dbReference>
<dbReference type="SUPFAM" id="SSF102114">
    <property type="entry name" value="Radical SAM enzymes"/>
    <property type="match status" value="1"/>
</dbReference>
<dbReference type="PROSITE" id="PS51918">
    <property type="entry name" value="RADICAL_SAM"/>
    <property type="match status" value="1"/>
</dbReference>